<organism>
    <name type="scientific">Chromobacterium violaceum (strain ATCC 12472 / DSM 30191 / JCM 1249 / CCUG 213 / NBRC 12614 / NCIMB 9131 / NCTC 9757 / MK)</name>
    <dbReference type="NCBI Taxonomy" id="243365"/>
    <lineage>
        <taxon>Bacteria</taxon>
        <taxon>Pseudomonadati</taxon>
        <taxon>Pseudomonadota</taxon>
        <taxon>Betaproteobacteria</taxon>
        <taxon>Neisseriales</taxon>
        <taxon>Chromobacteriaceae</taxon>
        <taxon>Chromobacterium</taxon>
    </lineage>
</organism>
<proteinExistence type="inferred from homology"/>
<dbReference type="EC" id="2.1.1.77" evidence="1"/>
<dbReference type="EMBL" id="AE016825">
    <property type="protein sequence ID" value="AAQ61342.1"/>
    <property type="molecule type" value="Genomic_DNA"/>
</dbReference>
<dbReference type="RefSeq" id="WP_011137227.1">
    <property type="nucleotide sequence ID" value="NC_005085.1"/>
</dbReference>
<dbReference type="SMR" id="Q7NRV0"/>
<dbReference type="STRING" id="243365.CV_3680"/>
<dbReference type="GeneID" id="66364913"/>
<dbReference type="KEGG" id="cvi:CV_3680"/>
<dbReference type="eggNOG" id="COG2518">
    <property type="taxonomic scope" value="Bacteria"/>
</dbReference>
<dbReference type="HOGENOM" id="CLU_055432_2_0_4"/>
<dbReference type="OrthoDB" id="9810066at2"/>
<dbReference type="Proteomes" id="UP000001424">
    <property type="component" value="Chromosome"/>
</dbReference>
<dbReference type="GO" id="GO:0005737">
    <property type="term" value="C:cytoplasm"/>
    <property type="evidence" value="ECO:0007669"/>
    <property type="project" value="UniProtKB-SubCell"/>
</dbReference>
<dbReference type="GO" id="GO:0004719">
    <property type="term" value="F:protein-L-isoaspartate (D-aspartate) O-methyltransferase activity"/>
    <property type="evidence" value="ECO:0007669"/>
    <property type="project" value="UniProtKB-UniRule"/>
</dbReference>
<dbReference type="GO" id="GO:0032259">
    <property type="term" value="P:methylation"/>
    <property type="evidence" value="ECO:0007669"/>
    <property type="project" value="UniProtKB-KW"/>
</dbReference>
<dbReference type="GO" id="GO:0036211">
    <property type="term" value="P:protein modification process"/>
    <property type="evidence" value="ECO:0007669"/>
    <property type="project" value="UniProtKB-UniRule"/>
</dbReference>
<dbReference type="GO" id="GO:0030091">
    <property type="term" value="P:protein repair"/>
    <property type="evidence" value="ECO:0007669"/>
    <property type="project" value="UniProtKB-UniRule"/>
</dbReference>
<dbReference type="CDD" id="cd02440">
    <property type="entry name" value="AdoMet_MTases"/>
    <property type="match status" value="1"/>
</dbReference>
<dbReference type="FunFam" id="3.40.50.150:FF:000010">
    <property type="entry name" value="Protein-L-isoaspartate O-methyltransferase"/>
    <property type="match status" value="1"/>
</dbReference>
<dbReference type="Gene3D" id="3.40.50.150">
    <property type="entry name" value="Vaccinia Virus protein VP39"/>
    <property type="match status" value="1"/>
</dbReference>
<dbReference type="HAMAP" id="MF_00090">
    <property type="entry name" value="PIMT"/>
    <property type="match status" value="1"/>
</dbReference>
<dbReference type="InterPro" id="IPR000682">
    <property type="entry name" value="PCMT"/>
</dbReference>
<dbReference type="InterPro" id="IPR029063">
    <property type="entry name" value="SAM-dependent_MTases_sf"/>
</dbReference>
<dbReference type="NCBIfam" id="TIGR00080">
    <property type="entry name" value="pimt"/>
    <property type="match status" value="1"/>
</dbReference>
<dbReference type="NCBIfam" id="NF001453">
    <property type="entry name" value="PRK00312.1"/>
    <property type="match status" value="1"/>
</dbReference>
<dbReference type="PANTHER" id="PTHR11579">
    <property type="entry name" value="PROTEIN-L-ISOASPARTATE O-METHYLTRANSFERASE"/>
    <property type="match status" value="1"/>
</dbReference>
<dbReference type="PANTHER" id="PTHR11579:SF0">
    <property type="entry name" value="PROTEIN-L-ISOASPARTATE(D-ASPARTATE) O-METHYLTRANSFERASE"/>
    <property type="match status" value="1"/>
</dbReference>
<dbReference type="Pfam" id="PF01135">
    <property type="entry name" value="PCMT"/>
    <property type="match status" value="1"/>
</dbReference>
<dbReference type="SUPFAM" id="SSF53335">
    <property type="entry name" value="S-adenosyl-L-methionine-dependent methyltransferases"/>
    <property type="match status" value="1"/>
</dbReference>
<dbReference type="PROSITE" id="PS01279">
    <property type="entry name" value="PCMT"/>
    <property type="match status" value="1"/>
</dbReference>
<sequence length="222" mass="24009">MAAPLTPNAQAYGMLSERTRRRMSDRLRQHGISDERVLSAMHEVPRHLFVDQALATRAYDDVSLPIGHGQTISQPLTVARMTELLIQGRQPGKILEVGTGCGYQTAVLLKTGAEVYSIERLGAILDQARRNLRAAKLVHARLVHGDGNAGLPEAAPFDGIIITAAARAVPAPLVDQLAEGGRMVLPLGDAEQHLWLLEKTAQGLQKTRLDPVKFVPLLGGRG</sequence>
<name>PIMT_CHRVO</name>
<gene>
    <name evidence="1" type="primary">pcm</name>
    <name type="ordered locus">CV_3680</name>
</gene>
<reference key="1">
    <citation type="journal article" date="2003" name="Proc. Natl. Acad. Sci. U.S.A.">
        <title>The complete genome sequence of Chromobacterium violaceum reveals remarkable and exploitable bacterial adaptability.</title>
        <authorList>
            <person name="Vasconcelos A.T.R."/>
            <person name="de Almeida D.F."/>
            <person name="Hungria M."/>
            <person name="Guimaraes C.T."/>
            <person name="Antonio R.V."/>
            <person name="Almeida F.C."/>
            <person name="de Almeida L.G.P."/>
            <person name="de Almeida R."/>
            <person name="Alves-Gomes J.A."/>
            <person name="Andrade E.M."/>
            <person name="Araripe J."/>
            <person name="de Araujo M.F.F."/>
            <person name="Astolfi-Filho S."/>
            <person name="Azevedo V."/>
            <person name="Baptista A.J."/>
            <person name="Bataus L.A.M."/>
            <person name="Batista J.S."/>
            <person name="Belo A."/>
            <person name="van den Berg C."/>
            <person name="Bogo M."/>
            <person name="Bonatto S."/>
            <person name="Bordignon J."/>
            <person name="Brigido M.M."/>
            <person name="Brito C.A."/>
            <person name="Brocchi M."/>
            <person name="Burity H.A."/>
            <person name="Camargo A.A."/>
            <person name="Cardoso D.D.P."/>
            <person name="Carneiro N.P."/>
            <person name="Carraro D.M."/>
            <person name="Carvalho C.M.B."/>
            <person name="Cascardo J.C.M."/>
            <person name="Cavada B.S."/>
            <person name="Chueire L.M.O."/>
            <person name="Creczynski-Pasa T.B."/>
            <person name="Cunha-Junior N.C."/>
            <person name="Fagundes N."/>
            <person name="Falcao C.L."/>
            <person name="Fantinatti F."/>
            <person name="Farias I.P."/>
            <person name="Felipe M.S.S."/>
            <person name="Ferrari L.P."/>
            <person name="Ferro J.A."/>
            <person name="Ferro M.I.T."/>
            <person name="Franco G.R."/>
            <person name="Freitas N.S.A."/>
            <person name="Furlan L.R."/>
            <person name="Gazzinelli R.T."/>
            <person name="Gomes E.A."/>
            <person name="Goncalves P.R."/>
            <person name="Grangeiro T.B."/>
            <person name="Grattapaglia D."/>
            <person name="Grisard E.C."/>
            <person name="Hanna E.S."/>
            <person name="Jardim S.N."/>
            <person name="Laurino J."/>
            <person name="Leoi L.C.T."/>
            <person name="Lima L.F.A."/>
            <person name="Loureiro M.F."/>
            <person name="Lyra M.C.C.P."/>
            <person name="Madeira H.M.F."/>
            <person name="Manfio G.P."/>
            <person name="Maranhao A.Q."/>
            <person name="Martins W.S."/>
            <person name="di Mauro S.M.Z."/>
            <person name="de Medeiros S.R.B."/>
            <person name="Meissner R.V."/>
            <person name="Moreira M.A.M."/>
            <person name="Nascimento F.F."/>
            <person name="Nicolas M.F."/>
            <person name="Oliveira J.G."/>
            <person name="Oliveira S.C."/>
            <person name="Paixao R.F.C."/>
            <person name="Parente J.A."/>
            <person name="Pedrosa F.O."/>
            <person name="Pena S.D.J."/>
            <person name="Pereira J.O."/>
            <person name="Pereira M."/>
            <person name="Pinto L.S.R.C."/>
            <person name="Pinto L.S."/>
            <person name="Porto J.I.R."/>
            <person name="Potrich D.P."/>
            <person name="Ramalho-Neto C.E."/>
            <person name="Reis A.M.M."/>
            <person name="Rigo L.U."/>
            <person name="Rondinelli E."/>
            <person name="Santos E.B.P."/>
            <person name="Santos F.R."/>
            <person name="Schneider M.P.C."/>
            <person name="Seuanez H.N."/>
            <person name="Silva A.M.R."/>
            <person name="da Silva A.L.C."/>
            <person name="Silva D.W."/>
            <person name="Silva R."/>
            <person name="Simoes I.C."/>
            <person name="Simon D."/>
            <person name="Soares C.M.A."/>
            <person name="Soares R.B.A."/>
            <person name="Souza E.M."/>
            <person name="Souza K.R.L."/>
            <person name="Souza R.C."/>
            <person name="Steffens M.B.R."/>
            <person name="Steindel M."/>
            <person name="Teixeira S.R."/>
            <person name="Urmenyi T."/>
            <person name="Vettore A."/>
            <person name="Wassem R."/>
            <person name="Zaha A."/>
            <person name="Simpson A.J.G."/>
        </authorList>
    </citation>
    <scope>NUCLEOTIDE SEQUENCE [LARGE SCALE GENOMIC DNA]</scope>
    <source>
        <strain>ATCC 12472 / DSM 30191 / JCM 1249 / CCUG 213 / NBRC 12614 / NCIMB 9131 / NCTC 9757 / MK</strain>
    </source>
</reference>
<keyword id="KW-0963">Cytoplasm</keyword>
<keyword id="KW-0489">Methyltransferase</keyword>
<keyword id="KW-1185">Reference proteome</keyword>
<keyword id="KW-0949">S-adenosyl-L-methionine</keyword>
<keyword id="KW-0808">Transferase</keyword>
<comment type="function">
    <text evidence="1">Catalyzes the methyl esterification of L-isoaspartyl residues in peptides and proteins that result from spontaneous decomposition of normal L-aspartyl and L-asparaginyl residues. It plays a role in the repair and/or degradation of damaged proteins.</text>
</comment>
<comment type="catalytic activity">
    <reaction evidence="1">
        <text>[protein]-L-isoaspartate + S-adenosyl-L-methionine = [protein]-L-isoaspartate alpha-methyl ester + S-adenosyl-L-homocysteine</text>
        <dbReference type="Rhea" id="RHEA:12705"/>
        <dbReference type="Rhea" id="RHEA-COMP:12143"/>
        <dbReference type="Rhea" id="RHEA-COMP:12144"/>
        <dbReference type="ChEBI" id="CHEBI:57856"/>
        <dbReference type="ChEBI" id="CHEBI:59789"/>
        <dbReference type="ChEBI" id="CHEBI:90596"/>
        <dbReference type="ChEBI" id="CHEBI:90598"/>
        <dbReference type="EC" id="2.1.1.77"/>
    </reaction>
</comment>
<comment type="subcellular location">
    <subcellularLocation>
        <location evidence="1">Cytoplasm</location>
    </subcellularLocation>
</comment>
<comment type="similarity">
    <text evidence="1">Belongs to the methyltransferase superfamily. L-isoaspartyl/D-aspartyl protein methyltransferase family.</text>
</comment>
<feature type="chain" id="PRO_0000351846" description="Protein-L-isoaspartate O-methyltransferase">
    <location>
        <begin position="1"/>
        <end position="222"/>
    </location>
</feature>
<feature type="active site" evidence="1">
    <location>
        <position position="73"/>
    </location>
</feature>
<evidence type="ECO:0000255" key="1">
    <source>
        <dbReference type="HAMAP-Rule" id="MF_00090"/>
    </source>
</evidence>
<protein>
    <recommendedName>
        <fullName evidence="1">Protein-L-isoaspartate O-methyltransferase</fullName>
        <ecNumber evidence="1">2.1.1.77</ecNumber>
    </recommendedName>
    <alternativeName>
        <fullName evidence="1">L-isoaspartyl protein carboxyl methyltransferase</fullName>
    </alternativeName>
    <alternativeName>
        <fullName evidence="1">Protein L-isoaspartyl methyltransferase</fullName>
    </alternativeName>
    <alternativeName>
        <fullName evidence="1">Protein-beta-aspartate methyltransferase</fullName>
        <shortName evidence="1">PIMT</shortName>
    </alternativeName>
</protein>
<accession>Q7NRV0</accession>